<sequence>MTLPLTFSPEVAEARAAGAPLVALESTIITHGMPYPQNLDTARAVEAEVRAAGAVPATIAIMDGRMHIGLTGTELEVLAQADGVAKLSRADLAACLARGGVGATTVAATMICAALAGIHVFATGGIGGVHKGAEDTFDISADLRELAHTPVTVIAAGAKAILDLPKTLEVLETLGVPVIAHGQDAFPAFWSRDSGLPAPLRADSATEIARAHLMRSKLGLPGGQLVANPIPEDAEIPASTLAPLIVQAQSEADAKGVARKAVTPFLLNRLFELTDGATLASNIALVLNNARLGAAVARALTT</sequence>
<comment type="function">
    <text evidence="1">Catalyzes the reversible cleavage of pseudouridine 5'-phosphate (PsiMP) to ribose 5-phosphate and uracil. Functions biologically in the cleavage direction, as part of a pseudouridine degradation pathway.</text>
</comment>
<comment type="catalytic activity">
    <reaction evidence="1">
        <text>D-ribose 5-phosphate + uracil = psi-UMP + H2O</text>
        <dbReference type="Rhea" id="RHEA:18337"/>
        <dbReference type="ChEBI" id="CHEBI:15377"/>
        <dbReference type="ChEBI" id="CHEBI:17568"/>
        <dbReference type="ChEBI" id="CHEBI:58380"/>
        <dbReference type="ChEBI" id="CHEBI:78346"/>
        <dbReference type="EC" id="4.2.1.70"/>
    </reaction>
</comment>
<comment type="cofactor">
    <cofactor evidence="1">
        <name>Mn(2+)</name>
        <dbReference type="ChEBI" id="CHEBI:29035"/>
    </cofactor>
    <text evidence="1">Binds 1 Mn(2+) ion per subunit.</text>
</comment>
<comment type="subunit">
    <text evidence="1">Homotrimer.</text>
</comment>
<comment type="similarity">
    <text evidence="1">Belongs to the pseudouridine-5'-phosphate glycosidase family.</text>
</comment>
<organism>
    <name type="scientific">Jannaschia sp. (strain CCS1)</name>
    <dbReference type="NCBI Taxonomy" id="290400"/>
    <lineage>
        <taxon>Bacteria</taxon>
        <taxon>Pseudomonadati</taxon>
        <taxon>Pseudomonadota</taxon>
        <taxon>Alphaproteobacteria</taxon>
        <taxon>Rhodobacterales</taxon>
        <taxon>Roseobacteraceae</taxon>
        <taxon>Jannaschia</taxon>
    </lineage>
</organism>
<proteinExistence type="inferred from homology"/>
<protein>
    <recommendedName>
        <fullName evidence="1">Pseudouridine-5'-phosphate glycosidase</fullName>
        <shortName evidence="1">PsiMP glycosidase</shortName>
        <ecNumber evidence="1">4.2.1.70</ecNumber>
    </recommendedName>
</protein>
<keyword id="KW-0326">Glycosidase</keyword>
<keyword id="KW-0378">Hydrolase</keyword>
<keyword id="KW-0456">Lyase</keyword>
<keyword id="KW-0464">Manganese</keyword>
<keyword id="KW-0479">Metal-binding</keyword>
<keyword id="KW-1185">Reference proteome</keyword>
<gene>
    <name evidence="1" type="primary">psuG</name>
    <name type="ordered locus">Jann_2308</name>
</gene>
<evidence type="ECO:0000255" key="1">
    <source>
        <dbReference type="HAMAP-Rule" id="MF_01876"/>
    </source>
</evidence>
<dbReference type="EC" id="4.2.1.70" evidence="1"/>
<dbReference type="EMBL" id="CP000264">
    <property type="protein sequence ID" value="ABD55225.1"/>
    <property type="molecule type" value="Genomic_DNA"/>
</dbReference>
<dbReference type="RefSeq" id="WP_011455429.1">
    <property type="nucleotide sequence ID" value="NC_007802.1"/>
</dbReference>
<dbReference type="SMR" id="Q28PY7"/>
<dbReference type="STRING" id="290400.Jann_2308"/>
<dbReference type="KEGG" id="jan:Jann_2308"/>
<dbReference type="eggNOG" id="COG2313">
    <property type="taxonomic scope" value="Bacteria"/>
</dbReference>
<dbReference type="HOGENOM" id="CLU_012201_0_1_5"/>
<dbReference type="OrthoDB" id="9805870at2"/>
<dbReference type="Proteomes" id="UP000008326">
    <property type="component" value="Chromosome"/>
</dbReference>
<dbReference type="GO" id="GO:0005737">
    <property type="term" value="C:cytoplasm"/>
    <property type="evidence" value="ECO:0007669"/>
    <property type="project" value="TreeGrafter"/>
</dbReference>
<dbReference type="GO" id="GO:0016798">
    <property type="term" value="F:hydrolase activity, acting on glycosyl bonds"/>
    <property type="evidence" value="ECO:0007669"/>
    <property type="project" value="UniProtKB-KW"/>
</dbReference>
<dbReference type="GO" id="GO:0046872">
    <property type="term" value="F:metal ion binding"/>
    <property type="evidence" value="ECO:0007669"/>
    <property type="project" value="UniProtKB-KW"/>
</dbReference>
<dbReference type="GO" id="GO:0004730">
    <property type="term" value="F:pseudouridylate synthase activity"/>
    <property type="evidence" value="ECO:0007669"/>
    <property type="project" value="UniProtKB-UniRule"/>
</dbReference>
<dbReference type="GO" id="GO:0046113">
    <property type="term" value="P:nucleobase catabolic process"/>
    <property type="evidence" value="ECO:0007669"/>
    <property type="project" value="UniProtKB-UniRule"/>
</dbReference>
<dbReference type="Gene3D" id="3.40.1790.10">
    <property type="entry name" value="Indigoidine synthase domain"/>
    <property type="match status" value="1"/>
</dbReference>
<dbReference type="HAMAP" id="MF_01876">
    <property type="entry name" value="PsiMP_glycosidase"/>
    <property type="match status" value="1"/>
</dbReference>
<dbReference type="InterPro" id="IPR022830">
    <property type="entry name" value="Indigdn_synthA-like"/>
</dbReference>
<dbReference type="InterPro" id="IPR007342">
    <property type="entry name" value="PsuG"/>
</dbReference>
<dbReference type="PANTHER" id="PTHR42909:SF1">
    <property type="entry name" value="CARBOHYDRATE KINASE PFKB DOMAIN-CONTAINING PROTEIN"/>
    <property type="match status" value="1"/>
</dbReference>
<dbReference type="PANTHER" id="PTHR42909">
    <property type="entry name" value="ZGC:136858"/>
    <property type="match status" value="1"/>
</dbReference>
<dbReference type="Pfam" id="PF04227">
    <property type="entry name" value="Indigoidine_A"/>
    <property type="match status" value="1"/>
</dbReference>
<dbReference type="SUPFAM" id="SSF110581">
    <property type="entry name" value="Indigoidine synthase A-like"/>
    <property type="match status" value="1"/>
</dbReference>
<accession>Q28PY7</accession>
<reference key="1">
    <citation type="submission" date="2006-02" db="EMBL/GenBank/DDBJ databases">
        <title>Complete sequence of chromosome of Jannaschia sp. CCS1.</title>
        <authorList>
            <consortium name="US DOE Joint Genome Institute"/>
            <person name="Copeland A."/>
            <person name="Lucas S."/>
            <person name="Lapidus A."/>
            <person name="Barry K."/>
            <person name="Detter J.C."/>
            <person name="Glavina del Rio T."/>
            <person name="Hammon N."/>
            <person name="Israni S."/>
            <person name="Pitluck S."/>
            <person name="Brettin T."/>
            <person name="Bruce D."/>
            <person name="Han C."/>
            <person name="Tapia R."/>
            <person name="Gilna P."/>
            <person name="Chertkov O."/>
            <person name="Saunders E."/>
            <person name="Schmutz J."/>
            <person name="Larimer F."/>
            <person name="Land M."/>
            <person name="Kyrpides N."/>
            <person name="Lykidis A."/>
            <person name="Moran M.A."/>
            <person name="Belas R."/>
            <person name="Ye W."/>
            <person name="Buchan A."/>
            <person name="Gonzalez J.M."/>
            <person name="Schell M.A."/>
            <person name="Richardson P."/>
        </authorList>
    </citation>
    <scope>NUCLEOTIDE SEQUENCE [LARGE SCALE GENOMIC DNA]</scope>
    <source>
        <strain>CCS1</strain>
    </source>
</reference>
<name>PSUG_JANSC</name>
<feature type="chain" id="PRO_0000390525" description="Pseudouridine-5'-phosphate glycosidase">
    <location>
        <begin position="1"/>
        <end position="302"/>
    </location>
</feature>
<feature type="active site" description="Proton donor" evidence="1">
    <location>
        <position position="25"/>
    </location>
</feature>
<feature type="active site" description="Nucleophile" evidence="1">
    <location>
        <position position="159"/>
    </location>
</feature>
<feature type="binding site" evidence="1">
    <location>
        <position position="86"/>
    </location>
    <ligand>
        <name>substrate</name>
    </ligand>
</feature>
<feature type="binding site" evidence="1">
    <location>
        <position position="106"/>
    </location>
    <ligand>
        <name>substrate</name>
    </ligand>
</feature>
<feature type="binding site" evidence="1">
    <location>
        <position position="138"/>
    </location>
    <ligand>
        <name>Mn(2+)</name>
        <dbReference type="ChEBI" id="CHEBI:29035"/>
    </ligand>
</feature>
<feature type="binding site" evidence="1">
    <location>
        <begin position="140"/>
        <end position="142"/>
    </location>
    <ligand>
        <name>substrate</name>
    </ligand>
</feature>